<keyword id="KW-0067">ATP-binding</keyword>
<keyword id="KW-0418">Kinase</keyword>
<keyword id="KW-0460">Magnesium</keyword>
<keyword id="KW-0472">Membrane</keyword>
<keyword id="KW-0479">Metal-binding</keyword>
<keyword id="KW-0547">Nucleotide-binding</keyword>
<keyword id="KW-1185">Reference proteome</keyword>
<keyword id="KW-0723">Serine/threonine-protein kinase</keyword>
<keyword id="KW-0808">Transferase</keyword>
<keyword id="KW-0812">Transmembrane</keyword>
<keyword id="KW-1133">Transmembrane helix</keyword>
<accession>Q556S2</accession>
<accession>Q86JX3</accession>
<dbReference type="EC" id="2.7.11.1"/>
<dbReference type="EMBL" id="AAFI02000009">
    <property type="protein sequence ID" value="EAL70778.1"/>
    <property type="molecule type" value="Genomic_DNA"/>
</dbReference>
<dbReference type="EMBL" id="AAFI02000011">
    <property type="protein sequence ID" value="EAL70623.1"/>
    <property type="molecule type" value="Genomic_DNA"/>
</dbReference>
<dbReference type="RefSeq" id="XP_644549.1">
    <property type="nucleotide sequence ID" value="XM_639457.1"/>
</dbReference>
<dbReference type="RefSeq" id="XP_644702.1">
    <property type="nucleotide sequence ID" value="XM_639610.1"/>
</dbReference>
<dbReference type="SMR" id="Q556S2"/>
<dbReference type="STRING" id="44689.Q556S2"/>
<dbReference type="PaxDb" id="44689-DDB0229408"/>
<dbReference type="EnsemblProtists" id="EAL70623">
    <property type="protein sequence ID" value="EAL70623"/>
    <property type="gene ID" value="DDB_G0273865"/>
</dbReference>
<dbReference type="EnsemblProtists" id="EAL70778">
    <property type="protein sequence ID" value="EAL70778"/>
    <property type="gene ID" value="DDB_G0273121"/>
</dbReference>
<dbReference type="GeneID" id="8618801"/>
<dbReference type="GeneID" id="8619175"/>
<dbReference type="KEGG" id="ddi:DDB_G0273121"/>
<dbReference type="KEGG" id="ddi:DDB_G0273865"/>
<dbReference type="dictyBase" id="DDB_G0273121">
    <property type="gene designation" value="pakH-1"/>
</dbReference>
<dbReference type="dictyBase" id="DDB_G0273865">
    <property type="gene designation" value="pakH-2"/>
</dbReference>
<dbReference type="VEuPathDB" id="AmoebaDB:DDB_G0273865"/>
<dbReference type="eggNOG" id="KOG0574">
    <property type="taxonomic scope" value="Eukaryota"/>
</dbReference>
<dbReference type="HOGENOM" id="CLU_000288_63_23_1"/>
<dbReference type="InParanoid" id="Q556S2"/>
<dbReference type="OMA" id="PMRAMYM"/>
<dbReference type="PhylomeDB" id="Q556S2"/>
<dbReference type="PRO" id="PR:Q556S2"/>
<dbReference type="Proteomes" id="UP000002195">
    <property type="component" value="Chromosome 2"/>
</dbReference>
<dbReference type="GO" id="GO:0005737">
    <property type="term" value="C:cytoplasm"/>
    <property type="evidence" value="ECO:0000318"/>
    <property type="project" value="GO_Central"/>
</dbReference>
<dbReference type="GO" id="GO:0016020">
    <property type="term" value="C:membrane"/>
    <property type="evidence" value="ECO:0007669"/>
    <property type="project" value="UniProtKB-SubCell"/>
</dbReference>
<dbReference type="GO" id="GO:0005524">
    <property type="term" value="F:ATP binding"/>
    <property type="evidence" value="ECO:0000250"/>
    <property type="project" value="dictyBase"/>
</dbReference>
<dbReference type="GO" id="GO:0046872">
    <property type="term" value="F:metal ion binding"/>
    <property type="evidence" value="ECO:0007669"/>
    <property type="project" value="UniProtKB-KW"/>
</dbReference>
<dbReference type="GO" id="GO:0106310">
    <property type="term" value="F:protein serine kinase activity"/>
    <property type="evidence" value="ECO:0007669"/>
    <property type="project" value="RHEA"/>
</dbReference>
<dbReference type="GO" id="GO:0004674">
    <property type="term" value="F:protein serine/threonine kinase activity"/>
    <property type="evidence" value="ECO:0000250"/>
    <property type="project" value="dictyBase"/>
</dbReference>
<dbReference type="GO" id="GO:0035556">
    <property type="term" value="P:intracellular signal transduction"/>
    <property type="evidence" value="ECO:0000318"/>
    <property type="project" value="GO_Central"/>
</dbReference>
<dbReference type="GO" id="GO:0006468">
    <property type="term" value="P:protein phosphorylation"/>
    <property type="evidence" value="ECO:0000250"/>
    <property type="project" value="dictyBase"/>
</dbReference>
<dbReference type="GO" id="GO:0043408">
    <property type="term" value="P:regulation of MAPK cascade"/>
    <property type="evidence" value="ECO:0000318"/>
    <property type="project" value="GO_Central"/>
</dbReference>
<dbReference type="CDD" id="cd06612">
    <property type="entry name" value="STKc_MST1_2"/>
    <property type="match status" value="1"/>
</dbReference>
<dbReference type="FunFam" id="1.10.510.10:FF:000499">
    <property type="entry name" value="Serine/threonine-protein kinase KIC1"/>
    <property type="match status" value="1"/>
</dbReference>
<dbReference type="Gene3D" id="1.10.510.10">
    <property type="entry name" value="Transferase(Phosphotransferase) domain 1"/>
    <property type="match status" value="1"/>
</dbReference>
<dbReference type="InterPro" id="IPR011009">
    <property type="entry name" value="Kinase-like_dom_sf"/>
</dbReference>
<dbReference type="InterPro" id="IPR000719">
    <property type="entry name" value="Prot_kinase_dom"/>
</dbReference>
<dbReference type="InterPro" id="IPR017441">
    <property type="entry name" value="Protein_kinase_ATP_BS"/>
</dbReference>
<dbReference type="InterPro" id="IPR008271">
    <property type="entry name" value="Ser/Thr_kinase_AS"/>
</dbReference>
<dbReference type="InterPro" id="IPR050629">
    <property type="entry name" value="STE20/SPS1-PAK"/>
</dbReference>
<dbReference type="PANTHER" id="PTHR48012:SF28">
    <property type="entry name" value="SERINE_THREONINE-PROTEIN KINASE PAKE-RELATED"/>
    <property type="match status" value="1"/>
</dbReference>
<dbReference type="PANTHER" id="PTHR48012">
    <property type="entry name" value="STERILE20-LIKE KINASE, ISOFORM B-RELATED"/>
    <property type="match status" value="1"/>
</dbReference>
<dbReference type="Pfam" id="PF00069">
    <property type="entry name" value="Pkinase"/>
    <property type="match status" value="1"/>
</dbReference>
<dbReference type="SMART" id="SM00220">
    <property type="entry name" value="S_TKc"/>
    <property type="match status" value="1"/>
</dbReference>
<dbReference type="SUPFAM" id="SSF56112">
    <property type="entry name" value="Protein kinase-like (PK-like)"/>
    <property type="match status" value="1"/>
</dbReference>
<dbReference type="PROSITE" id="PS00107">
    <property type="entry name" value="PROTEIN_KINASE_ATP"/>
    <property type="match status" value="1"/>
</dbReference>
<dbReference type="PROSITE" id="PS50011">
    <property type="entry name" value="PROTEIN_KINASE_DOM"/>
    <property type="match status" value="1"/>
</dbReference>
<dbReference type="PROSITE" id="PS00108">
    <property type="entry name" value="PROTEIN_KINASE_ST"/>
    <property type="match status" value="1"/>
</dbReference>
<name>PAKH_DICDI</name>
<feature type="chain" id="PRO_0000363944" description="Serine/threonine-protein kinase pakH">
    <location>
        <begin position="1"/>
        <end position="513"/>
    </location>
</feature>
<feature type="transmembrane region" description="Helical" evidence="3">
    <location>
        <begin position="493"/>
        <end position="512"/>
    </location>
</feature>
<feature type="domain" description="Protein kinase" evidence="4">
    <location>
        <begin position="42"/>
        <end position="294"/>
    </location>
</feature>
<feature type="region of interest" description="Disordered" evidence="6">
    <location>
        <begin position="313"/>
        <end position="358"/>
    </location>
</feature>
<feature type="compositionally biased region" description="Low complexity" evidence="6">
    <location>
        <begin position="331"/>
        <end position="357"/>
    </location>
</feature>
<feature type="active site" description="Proton acceptor" evidence="1 4 5">
    <location>
        <position position="163"/>
    </location>
</feature>
<feature type="binding site" evidence="1 4">
    <location>
        <begin position="48"/>
        <end position="56"/>
    </location>
    <ligand>
        <name>ATP</name>
        <dbReference type="ChEBI" id="CHEBI:30616"/>
    </ligand>
</feature>
<feature type="binding site" evidence="1 4">
    <location>
        <position position="71"/>
    </location>
    <ligand>
        <name>ATP</name>
        <dbReference type="ChEBI" id="CHEBI:30616"/>
    </ligand>
</feature>
<sequence>MVRLFRSGSNPKEIDISQPNSLVHKVHVDLDLNWSSGGETSFEIQEKLGEGSFGSVYRAIHKSSNTSIAIKEFEIFEANDVEPISKEIQILKKCNNPYVVSYFGSIMLKNKYWILMDYCSLSSFNDIMQSIGKTFKEKEISLILQQSLLGLVYLHSKQIIHRDIKSANILLDETGQVKIADFGVSQQIQSTFSKGSIAGTPYWMAPEILNQTDYNNKIDVWSLGIVAIELADGEPPLSEVNPMRAMYMIGRRPPPTFKDPKKWSPEFVSFVDKCLTKDINERWSPSQLLDHPFIKSAKPDALKELTQMAIKLKSKKRKSIGPSVSPKQQPNDNNNNNNNNKPQFLSKLLNNNSNSSNDIGETTSGSVIYKPNVFSGSIDTGSVVIHNTITSNNNDSGSVVLNSNTVINRSKPLPPPPSYESVILNDKLKQQQQQQQQSNQQTTTTTTKQNTIKNKFNTISNTIKCNTILVQDKTLEIIQKTPMKNLDERNQKIVLYSTLGLILVLSVFFKFFK</sequence>
<evidence type="ECO:0000250" key="1">
    <source>
        <dbReference type="UniProtKB" id="P28523"/>
    </source>
</evidence>
<evidence type="ECO:0000250" key="2">
    <source>
        <dbReference type="UniProtKB" id="Q869N2"/>
    </source>
</evidence>
<evidence type="ECO:0000255" key="3"/>
<evidence type="ECO:0000255" key="4">
    <source>
        <dbReference type="PROSITE-ProRule" id="PRU00159"/>
    </source>
</evidence>
<evidence type="ECO:0000255" key="5">
    <source>
        <dbReference type="PROSITE-ProRule" id="PRU10027"/>
    </source>
</evidence>
<evidence type="ECO:0000256" key="6">
    <source>
        <dbReference type="SAM" id="MobiDB-lite"/>
    </source>
</evidence>
<evidence type="ECO:0000305" key="7"/>
<evidence type="ECO:0000312" key="8">
    <source>
        <dbReference type="dictyBase" id="DDB_G0273865"/>
    </source>
</evidence>
<evidence type="ECO:0000312" key="9">
    <source>
        <dbReference type="EMBL" id="EAL70623.1"/>
    </source>
</evidence>
<proteinExistence type="inferred from homology"/>
<protein>
    <recommendedName>
        <fullName evidence="2">Serine/threonine-protein kinase pakH</fullName>
        <ecNumber>2.7.11.1</ecNumber>
    </recommendedName>
</protein>
<organism>
    <name type="scientific">Dictyostelium discoideum</name>
    <name type="common">Social amoeba</name>
    <dbReference type="NCBI Taxonomy" id="44689"/>
    <lineage>
        <taxon>Eukaryota</taxon>
        <taxon>Amoebozoa</taxon>
        <taxon>Evosea</taxon>
        <taxon>Eumycetozoa</taxon>
        <taxon>Dictyostelia</taxon>
        <taxon>Dictyosteliales</taxon>
        <taxon>Dictyosteliaceae</taxon>
        <taxon>Dictyostelium</taxon>
    </lineage>
</organism>
<comment type="catalytic activity">
    <reaction evidence="2">
        <text>L-seryl-[protein] + ATP = O-phospho-L-seryl-[protein] + ADP + H(+)</text>
        <dbReference type="Rhea" id="RHEA:17989"/>
        <dbReference type="Rhea" id="RHEA-COMP:9863"/>
        <dbReference type="Rhea" id="RHEA-COMP:11604"/>
        <dbReference type="ChEBI" id="CHEBI:15378"/>
        <dbReference type="ChEBI" id="CHEBI:29999"/>
        <dbReference type="ChEBI" id="CHEBI:30616"/>
        <dbReference type="ChEBI" id="CHEBI:83421"/>
        <dbReference type="ChEBI" id="CHEBI:456216"/>
        <dbReference type="EC" id="2.7.11.1"/>
    </reaction>
</comment>
<comment type="catalytic activity">
    <reaction evidence="2">
        <text>L-threonyl-[protein] + ATP = O-phospho-L-threonyl-[protein] + ADP + H(+)</text>
        <dbReference type="Rhea" id="RHEA:46608"/>
        <dbReference type="Rhea" id="RHEA-COMP:11060"/>
        <dbReference type="Rhea" id="RHEA-COMP:11605"/>
        <dbReference type="ChEBI" id="CHEBI:15378"/>
        <dbReference type="ChEBI" id="CHEBI:30013"/>
        <dbReference type="ChEBI" id="CHEBI:30616"/>
        <dbReference type="ChEBI" id="CHEBI:61977"/>
        <dbReference type="ChEBI" id="CHEBI:456216"/>
        <dbReference type="EC" id="2.7.11.1"/>
    </reaction>
</comment>
<comment type="cofactor">
    <cofactor evidence="2">
        <name>Mg(2+)</name>
        <dbReference type="ChEBI" id="CHEBI:18420"/>
    </cofactor>
</comment>
<comment type="subcellular location">
    <subcellularLocation>
        <location evidence="3">Membrane</location>
        <topology evidence="3">Single-pass membrane protein</topology>
    </subcellularLocation>
</comment>
<comment type="similarity">
    <text evidence="2">Belongs to the protein kinase superfamily. STE Ser/Thr protein kinase family. STE20 subfamily.</text>
</comment>
<comment type="caution">
    <text evidence="7">The gene for this protein is duplicated in strains AX3 and AX4. These strains contain a duplication of a segment of 750 kb of chromosome 2 compared to the corresponding sequence in strain AX2.</text>
</comment>
<gene>
    <name type="primary">pakH-1</name>
    <name type="ORF">DDB_G0273121</name>
</gene>
<gene>
    <name evidence="8" type="primary">pakH-2</name>
    <name type="ORF">DDB_G0273865</name>
</gene>
<reference key="1">
    <citation type="journal article" date="2002" name="Nature">
        <title>Sequence and analysis of chromosome 2 of Dictyostelium discoideum.</title>
        <authorList>
            <person name="Gloeckner G."/>
            <person name="Eichinger L."/>
            <person name="Szafranski K."/>
            <person name="Pachebat J.A."/>
            <person name="Bankier A.T."/>
            <person name="Dear P.H."/>
            <person name="Lehmann R."/>
            <person name="Baumgart C."/>
            <person name="Parra G."/>
            <person name="Abril J.F."/>
            <person name="Guigo R."/>
            <person name="Kumpf K."/>
            <person name="Tunggal B."/>
            <person name="Cox E.C."/>
            <person name="Quail M.A."/>
            <person name="Platzer M."/>
            <person name="Rosenthal A."/>
            <person name="Noegel A.A."/>
        </authorList>
    </citation>
    <scope>NUCLEOTIDE SEQUENCE [LARGE SCALE GENOMIC DNA]</scope>
    <source>
        <strain>AX4</strain>
    </source>
</reference>
<reference evidence="9" key="2">
    <citation type="journal article" date="2005" name="Nature">
        <title>The genome of the social amoeba Dictyostelium discoideum.</title>
        <authorList>
            <person name="Eichinger L."/>
            <person name="Pachebat J.A."/>
            <person name="Gloeckner G."/>
            <person name="Rajandream M.A."/>
            <person name="Sucgang R."/>
            <person name="Berriman M."/>
            <person name="Song J."/>
            <person name="Olsen R."/>
            <person name="Szafranski K."/>
            <person name="Xu Q."/>
            <person name="Tunggal B."/>
            <person name="Kummerfeld S."/>
            <person name="Madera M."/>
            <person name="Konfortov B.A."/>
            <person name="Rivero F."/>
            <person name="Bankier A.T."/>
            <person name="Lehmann R."/>
            <person name="Hamlin N."/>
            <person name="Davies R."/>
            <person name="Gaudet P."/>
            <person name="Fey P."/>
            <person name="Pilcher K."/>
            <person name="Chen G."/>
            <person name="Saunders D."/>
            <person name="Sodergren E.J."/>
            <person name="Davis P."/>
            <person name="Kerhornou A."/>
            <person name="Nie X."/>
            <person name="Hall N."/>
            <person name="Anjard C."/>
            <person name="Hemphill L."/>
            <person name="Bason N."/>
            <person name="Farbrother P."/>
            <person name="Desany B."/>
            <person name="Just E."/>
            <person name="Morio T."/>
            <person name="Rost R."/>
            <person name="Churcher C.M."/>
            <person name="Cooper J."/>
            <person name="Haydock S."/>
            <person name="van Driessche N."/>
            <person name="Cronin A."/>
            <person name="Goodhead I."/>
            <person name="Muzny D.M."/>
            <person name="Mourier T."/>
            <person name="Pain A."/>
            <person name="Lu M."/>
            <person name="Harper D."/>
            <person name="Lindsay R."/>
            <person name="Hauser H."/>
            <person name="James K.D."/>
            <person name="Quiles M."/>
            <person name="Madan Babu M."/>
            <person name="Saito T."/>
            <person name="Buchrieser C."/>
            <person name="Wardroper A."/>
            <person name="Felder M."/>
            <person name="Thangavelu M."/>
            <person name="Johnson D."/>
            <person name="Knights A."/>
            <person name="Loulseged H."/>
            <person name="Mungall K.L."/>
            <person name="Oliver K."/>
            <person name="Price C."/>
            <person name="Quail M.A."/>
            <person name="Urushihara H."/>
            <person name="Hernandez J."/>
            <person name="Rabbinowitsch E."/>
            <person name="Steffen D."/>
            <person name="Sanders M."/>
            <person name="Ma J."/>
            <person name="Kohara Y."/>
            <person name="Sharp S."/>
            <person name="Simmonds M.N."/>
            <person name="Spiegler S."/>
            <person name="Tivey A."/>
            <person name="Sugano S."/>
            <person name="White B."/>
            <person name="Walker D."/>
            <person name="Woodward J.R."/>
            <person name="Winckler T."/>
            <person name="Tanaka Y."/>
            <person name="Shaulsky G."/>
            <person name="Schleicher M."/>
            <person name="Weinstock G.M."/>
            <person name="Rosenthal A."/>
            <person name="Cox E.C."/>
            <person name="Chisholm R.L."/>
            <person name="Gibbs R.A."/>
            <person name="Loomis W.F."/>
            <person name="Platzer M."/>
            <person name="Kay R.R."/>
            <person name="Williams J.G."/>
            <person name="Dear P.H."/>
            <person name="Noegel A.A."/>
            <person name="Barrell B.G."/>
            <person name="Kuspa A."/>
        </authorList>
    </citation>
    <scope>NUCLEOTIDE SEQUENCE [LARGE SCALE GENOMIC DNA]</scope>
    <source>
        <strain evidence="9">AX4</strain>
    </source>
</reference>